<feature type="chain" id="PRO_1000100643" description="Cytidylate kinase">
    <location>
        <begin position="1"/>
        <end position="224"/>
    </location>
</feature>
<feature type="binding site" evidence="1">
    <location>
        <begin position="12"/>
        <end position="20"/>
    </location>
    <ligand>
        <name>ATP</name>
        <dbReference type="ChEBI" id="CHEBI:30616"/>
    </ligand>
</feature>
<gene>
    <name evidence="1" type="primary">cmk</name>
    <name type="ordered locus">VSAL_I2219</name>
</gene>
<keyword id="KW-0067">ATP-binding</keyword>
<keyword id="KW-0963">Cytoplasm</keyword>
<keyword id="KW-0418">Kinase</keyword>
<keyword id="KW-0547">Nucleotide-binding</keyword>
<keyword id="KW-0808">Transferase</keyword>
<reference key="1">
    <citation type="journal article" date="2008" name="BMC Genomics">
        <title>The genome sequence of the fish pathogen Aliivibrio salmonicida strain LFI1238 shows extensive evidence of gene decay.</title>
        <authorList>
            <person name="Hjerde E."/>
            <person name="Lorentzen M.S."/>
            <person name="Holden M.T."/>
            <person name="Seeger K."/>
            <person name="Paulsen S."/>
            <person name="Bason N."/>
            <person name="Churcher C."/>
            <person name="Harris D."/>
            <person name="Norbertczak H."/>
            <person name="Quail M.A."/>
            <person name="Sanders S."/>
            <person name="Thurston S."/>
            <person name="Parkhill J."/>
            <person name="Willassen N.P."/>
            <person name="Thomson N.R."/>
        </authorList>
    </citation>
    <scope>NUCLEOTIDE SEQUENCE [LARGE SCALE GENOMIC DNA]</scope>
    <source>
        <strain>LFI1238</strain>
    </source>
</reference>
<protein>
    <recommendedName>
        <fullName evidence="1">Cytidylate kinase</fullName>
        <shortName evidence="1">CK</shortName>
        <ecNumber evidence="1">2.7.4.25</ecNumber>
    </recommendedName>
    <alternativeName>
        <fullName evidence="1">Cytidine monophosphate kinase</fullName>
        <shortName evidence="1">CMP kinase</shortName>
    </alternativeName>
</protein>
<dbReference type="EC" id="2.7.4.25" evidence="1"/>
<dbReference type="EMBL" id="FM178379">
    <property type="protein sequence ID" value="CAQ79904.1"/>
    <property type="molecule type" value="Genomic_DNA"/>
</dbReference>
<dbReference type="RefSeq" id="WP_012550734.1">
    <property type="nucleotide sequence ID" value="NC_011312.1"/>
</dbReference>
<dbReference type="SMR" id="B6EIX9"/>
<dbReference type="KEGG" id="vsa:VSAL_I2219"/>
<dbReference type="eggNOG" id="COG0283">
    <property type="taxonomic scope" value="Bacteria"/>
</dbReference>
<dbReference type="HOGENOM" id="CLU_079959_2_0_6"/>
<dbReference type="Proteomes" id="UP000001730">
    <property type="component" value="Chromosome 1"/>
</dbReference>
<dbReference type="GO" id="GO:0005829">
    <property type="term" value="C:cytosol"/>
    <property type="evidence" value="ECO:0007669"/>
    <property type="project" value="TreeGrafter"/>
</dbReference>
<dbReference type="GO" id="GO:0005524">
    <property type="term" value="F:ATP binding"/>
    <property type="evidence" value="ECO:0007669"/>
    <property type="project" value="UniProtKB-UniRule"/>
</dbReference>
<dbReference type="GO" id="GO:0036430">
    <property type="term" value="F:CMP kinase activity"/>
    <property type="evidence" value="ECO:0007669"/>
    <property type="project" value="RHEA"/>
</dbReference>
<dbReference type="GO" id="GO:0036431">
    <property type="term" value="F:dCMP kinase activity"/>
    <property type="evidence" value="ECO:0007669"/>
    <property type="project" value="RHEA"/>
</dbReference>
<dbReference type="GO" id="GO:0015949">
    <property type="term" value="P:nucleobase-containing small molecule interconversion"/>
    <property type="evidence" value="ECO:0007669"/>
    <property type="project" value="TreeGrafter"/>
</dbReference>
<dbReference type="GO" id="GO:0006220">
    <property type="term" value="P:pyrimidine nucleotide metabolic process"/>
    <property type="evidence" value="ECO:0007669"/>
    <property type="project" value="UniProtKB-UniRule"/>
</dbReference>
<dbReference type="CDD" id="cd02020">
    <property type="entry name" value="CMPK"/>
    <property type="match status" value="1"/>
</dbReference>
<dbReference type="FunFam" id="3.40.50.300:FF:000262">
    <property type="entry name" value="Cytidylate kinase"/>
    <property type="match status" value="1"/>
</dbReference>
<dbReference type="Gene3D" id="3.40.50.300">
    <property type="entry name" value="P-loop containing nucleotide triphosphate hydrolases"/>
    <property type="match status" value="1"/>
</dbReference>
<dbReference type="HAMAP" id="MF_00238">
    <property type="entry name" value="Cytidyl_kinase_type1"/>
    <property type="match status" value="1"/>
</dbReference>
<dbReference type="InterPro" id="IPR003136">
    <property type="entry name" value="Cytidylate_kin"/>
</dbReference>
<dbReference type="InterPro" id="IPR011994">
    <property type="entry name" value="Cytidylate_kinase_dom"/>
</dbReference>
<dbReference type="InterPro" id="IPR027417">
    <property type="entry name" value="P-loop_NTPase"/>
</dbReference>
<dbReference type="NCBIfam" id="TIGR00017">
    <property type="entry name" value="cmk"/>
    <property type="match status" value="1"/>
</dbReference>
<dbReference type="PANTHER" id="PTHR21299:SF2">
    <property type="entry name" value="CYTIDYLATE KINASE"/>
    <property type="match status" value="1"/>
</dbReference>
<dbReference type="PANTHER" id="PTHR21299">
    <property type="entry name" value="CYTIDYLATE KINASE/PANTOATE-BETA-ALANINE LIGASE"/>
    <property type="match status" value="1"/>
</dbReference>
<dbReference type="Pfam" id="PF02224">
    <property type="entry name" value="Cytidylate_kin"/>
    <property type="match status" value="1"/>
</dbReference>
<dbReference type="SUPFAM" id="SSF52540">
    <property type="entry name" value="P-loop containing nucleoside triphosphate hydrolases"/>
    <property type="match status" value="1"/>
</dbReference>
<name>KCY_ALISL</name>
<organism>
    <name type="scientific">Aliivibrio salmonicida (strain LFI1238)</name>
    <name type="common">Vibrio salmonicida (strain LFI1238)</name>
    <dbReference type="NCBI Taxonomy" id="316275"/>
    <lineage>
        <taxon>Bacteria</taxon>
        <taxon>Pseudomonadati</taxon>
        <taxon>Pseudomonadota</taxon>
        <taxon>Gammaproteobacteria</taxon>
        <taxon>Vibrionales</taxon>
        <taxon>Vibrionaceae</taxon>
        <taxon>Aliivibrio</taxon>
    </lineage>
</organism>
<evidence type="ECO:0000255" key="1">
    <source>
        <dbReference type="HAMAP-Rule" id="MF_00238"/>
    </source>
</evidence>
<proteinExistence type="inferred from homology"/>
<comment type="catalytic activity">
    <reaction evidence="1">
        <text>CMP + ATP = CDP + ADP</text>
        <dbReference type="Rhea" id="RHEA:11600"/>
        <dbReference type="ChEBI" id="CHEBI:30616"/>
        <dbReference type="ChEBI" id="CHEBI:58069"/>
        <dbReference type="ChEBI" id="CHEBI:60377"/>
        <dbReference type="ChEBI" id="CHEBI:456216"/>
        <dbReference type="EC" id="2.7.4.25"/>
    </reaction>
</comment>
<comment type="catalytic activity">
    <reaction evidence="1">
        <text>dCMP + ATP = dCDP + ADP</text>
        <dbReference type="Rhea" id="RHEA:25094"/>
        <dbReference type="ChEBI" id="CHEBI:30616"/>
        <dbReference type="ChEBI" id="CHEBI:57566"/>
        <dbReference type="ChEBI" id="CHEBI:58593"/>
        <dbReference type="ChEBI" id="CHEBI:456216"/>
        <dbReference type="EC" id="2.7.4.25"/>
    </reaction>
</comment>
<comment type="subcellular location">
    <subcellularLocation>
        <location evidence="1">Cytoplasm</location>
    </subcellularLocation>
</comment>
<comment type="similarity">
    <text evidence="1">Belongs to the cytidylate kinase family. Type 1 subfamily.</text>
</comment>
<accession>B6EIX9</accession>
<sequence>MTIHSPVVTVDGPSGAGKGTLCMLLAEKLGYNLLDSGAIYRVLALAAIHHGVDLGSEEGLVPLAANLDVQFKAEGDLVKVILEGEDVSSELRKEETGMAASKVAALPQVREALLRRQRAFASAPGLVADGRDMGTVVFTGAEVKIFLDASAEERANRRMKQLQQKGLNVRFDRLLSEIQERDDRDRNRAVAPLRPAEDALVLDSTSMNIDEVVAQALTFIESKL</sequence>